<evidence type="ECO:0000250" key="1"/>
<evidence type="ECO:0000305" key="2"/>
<comment type="function">
    <text evidence="1">Acts as a global negative controlling element, employing Fe(2+) as a cofactor to bind the operator of the repressed genes.</text>
</comment>
<comment type="subunit">
    <text evidence="1">Homodimer.</text>
</comment>
<comment type="subcellular location">
    <subcellularLocation>
        <location evidence="1">Cytoplasm</location>
    </subcellularLocation>
</comment>
<comment type="similarity">
    <text evidence="2">Belongs to the Fur family.</text>
</comment>
<keyword id="KW-0963">Cytoplasm</keyword>
<keyword id="KW-0238">DNA-binding</keyword>
<keyword id="KW-0408">Iron</keyword>
<keyword id="KW-0479">Metal-binding</keyword>
<keyword id="KW-0678">Repressor</keyword>
<keyword id="KW-0804">Transcription</keyword>
<keyword id="KW-0805">Transcription regulation</keyword>
<keyword id="KW-0862">Zinc</keyword>
<feature type="chain" id="PRO_0000095549" description="Ferric uptake regulation protein">
    <location>
        <begin position="1"/>
        <end position="156"/>
    </location>
</feature>
<feature type="region of interest" description="DNA-binding" evidence="1">
    <location>
        <begin position="1"/>
        <end position="96"/>
    </location>
</feature>
<feature type="region of interest" description="Dimerization" evidence="1">
    <location>
        <begin position="97"/>
        <end position="156"/>
    </location>
</feature>
<feature type="binding site" evidence="1">
    <location>
        <position position="43"/>
    </location>
    <ligand>
        <name>Zn(2+)</name>
        <dbReference type="ChEBI" id="CHEBI:29105"/>
    </ligand>
</feature>
<feature type="binding site" evidence="1">
    <location>
        <position position="93"/>
    </location>
    <ligand>
        <name>Zn(2+)</name>
        <dbReference type="ChEBI" id="CHEBI:29105"/>
    </ligand>
</feature>
<feature type="binding site" evidence="1">
    <location>
        <position position="99"/>
    </location>
    <ligand>
        <name>Fe cation</name>
        <dbReference type="ChEBI" id="CHEBI:24875"/>
    </ligand>
</feature>
<feature type="binding site" evidence="1">
    <location>
        <position position="101"/>
    </location>
    <ligand>
        <name>Fe cation</name>
        <dbReference type="ChEBI" id="CHEBI:24875"/>
    </ligand>
</feature>
<feature type="binding site" evidence="1">
    <location>
        <position position="102"/>
    </location>
    <ligand>
        <name>Zn(2+)</name>
        <dbReference type="ChEBI" id="CHEBI:29105"/>
    </ligand>
</feature>
<feature type="binding site" evidence="1">
    <location>
        <position position="105"/>
    </location>
    <ligand>
        <name>Zn(2+)</name>
        <dbReference type="ChEBI" id="CHEBI:29105"/>
    </ligand>
</feature>
<feature type="binding site" evidence="1">
    <location>
        <position position="108"/>
    </location>
    <ligand>
        <name>Zn(2+)</name>
        <dbReference type="ChEBI" id="CHEBI:29105"/>
    </ligand>
</feature>
<feature type="binding site" evidence="1">
    <location>
        <position position="113"/>
    </location>
    <ligand>
        <name>Zn(2+)</name>
        <dbReference type="ChEBI" id="CHEBI:29105"/>
    </ligand>
</feature>
<feature type="binding site" evidence="1">
    <location>
        <position position="120"/>
    </location>
    <ligand>
        <name>Fe cation</name>
        <dbReference type="ChEBI" id="CHEBI:24875"/>
    </ligand>
</feature>
<feature type="binding site" evidence="1">
    <location>
        <position position="137"/>
    </location>
    <ligand>
        <name>Fe cation</name>
        <dbReference type="ChEBI" id="CHEBI:24875"/>
    </ligand>
</feature>
<reference key="1">
    <citation type="journal article" date="1996" name="Gene">
        <title>Characterization of Campylobacter upsaliensis fur and its localization in a highly conserved region of the Campylobacter genome.</title>
        <authorList>
            <person name="Bourke B."/>
            <person name="Al-Rashid S.T."/>
            <person name="Bingham H.L."/>
            <person name="Chan V.L."/>
        </authorList>
    </citation>
    <scope>NUCLEOTIDE SEQUENCE [GENOMIC DNA]</scope>
    <source>
        <strain>ATCC 43954 / DSM 5365 / CCUG 14913 / LMG 8850 / NCTC 11541</strain>
    </source>
</reference>
<name>FUR_CAMUP</name>
<organism>
    <name type="scientific">Campylobacter upsaliensis</name>
    <dbReference type="NCBI Taxonomy" id="28080"/>
    <lineage>
        <taxon>Bacteria</taxon>
        <taxon>Pseudomonadati</taxon>
        <taxon>Campylobacterota</taxon>
        <taxon>Epsilonproteobacteria</taxon>
        <taxon>Campylobacterales</taxon>
        <taxon>Campylobacteraceae</taxon>
        <taxon>Campylobacter</taxon>
    </lineage>
</organism>
<gene>
    <name type="primary">fur</name>
</gene>
<proteinExistence type="inferred from homology"/>
<dbReference type="EMBL" id="L77075">
    <property type="protein sequence ID" value="AAB41341.1"/>
    <property type="molecule type" value="Genomic_DNA"/>
</dbReference>
<dbReference type="PIR" id="JC5752">
    <property type="entry name" value="JC5752"/>
</dbReference>
<dbReference type="SMR" id="Q46463"/>
<dbReference type="GO" id="GO:0005829">
    <property type="term" value="C:cytosol"/>
    <property type="evidence" value="ECO:0007669"/>
    <property type="project" value="TreeGrafter"/>
</dbReference>
<dbReference type="GO" id="GO:0003700">
    <property type="term" value="F:DNA-binding transcription factor activity"/>
    <property type="evidence" value="ECO:0007669"/>
    <property type="project" value="InterPro"/>
</dbReference>
<dbReference type="GO" id="GO:0000976">
    <property type="term" value="F:transcription cis-regulatory region binding"/>
    <property type="evidence" value="ECO:0007669"/>
    <property type="project" value="TreeGrafter"/>
</dbReference>
<dbReference type="GO" id="GO:0008270">
    <property type="term" value="F:zinc ion binding"/>
    <property type="evidence" value="ECO:0007669"/>
    <property type="project" value="TreeGrafter"/>
</dbReference>
<dbReference type="GO" id="GO:0045892">
    <property type="term" value="P:negative regulation of DNA-templated transcription"/>
    <property type="evidence" value="ECO:0007669"/>
    <property type="project" value="TreeGrafter"/>
</dbReference>
<dbReference type="GO" id="GO:1900705">
    <property type="term" value="P:negative regulation of siderophore biosynthetic process"/>
    <property type="evidence" value="ECO:0007669"/>
    <property type="project" value="TreeGrafter"/>
</dbReference>
<dbReference type="CDD" id="cd07153">
    <property type="entry name" value="Fur_like"/>
    <property type="match status" value="1"/>
</dbReference>
<dbReference type="FunFam" id="3.30.1490.190:FF:000001">
    <property type="entry name" value="Ferric uptake regulation protein"/>
    <property type="match status" value="1"/>
</dbReference>
<dbReference type="Gene3D" id="3.30.1490.190">
    <property type="match status" value="1"/>
</dbReference>
<dbReference type="Gene3D" id="1.10.10.10">
    <property type="entry name" value="Winged helix-like DNA-binding domain superfamily/Winged helix DNA-binding domain"/>
    <property type="match status" value="1"/>
</dbReference>
<dbReference type="InterPro" id="IPR002481">
    <property type="entry name" value="FUR"/>
</dbReference>
<dbReference type="InterPro" id="IPR043135">
    <property type="entry name" value="Fur_C"/>
</dbReference>
<dbReference type="InterPro" id="IPR036388">
    <property type="entry name" value="WH-like_DNA-bd_sf"/>
</dbReference>
<dbReference type="InterPro" id="IPR036390">
    <property type="entry name" value="WH_DNA-bd_sf"/>
</dbReference>
<dbReference type="PANTHER" id="PTHR33202:SF2">
    <property type="entry name" value="FERRIC UPTAKE REGULATION PROTEIN"/>
    <property type="match status" value="1"/>
</dbReference>
<dbReference type="PANTHER" id="PTHR33202">
    <property type="entry name" value="ZINC UPTAKE REGULATION PROTEIN"/>
    <property type="match status" value="1"/>
</dbReference>
<dbReference type="Pfam" id="PF01475">
    <property type="entry name" value="FUR"/>
    <property type="match status" value="1"/>
</dbReference>
<dbReference type="SUPFAM" id="SSF46785">
    <property type="entry name" value="Winged helix' DNA-binding domain"/>
    <property type="match status" value="1"/>
</dbReference>
<accession>Q46463</accession>
<sequence length="156" mass="18109">MLMENLEYDVLLEKFKKILREGGLKYTKQREVLLKTLYHSDTHYTPESLYMEIKQAEPDSNVGIATVYRTLNLLEEAEMVTSLSLDSAGKKYELSNKPHHDHMICKVCGKIIEFENPIIERQQSLIANEHHFKLTGHLMQLYGICSDCNHKTKVKI</sequence>
<protein>
    <recommendedName>
        <fullName>Ferric uptake regulation protein</fullName>
        <shortName>Ferric uptake regulator</shortName>
    </recommendedName>
</protein>